<evidence type="ECO:0000256" key="1">
    <source>
        <dbReference type="SAM" id="MobiDB-lite"/>
    </source>
</evidence>
<reference key="1">
    <citation type="journal article" date="1992" name="Virology">
        <title>The DNA sequence of equine herpesvirus-1.</title>
        <authorList>
            <person name="Telford E.A.R."/>
            <person name="Watson M.S."/>
            <person name="McBride K."/>
            <person name="Davison A.J."/>
        </authorList>
    </citation>
    <scope>NUCLEOTIDE SEQUENCE [LARGE SCALE GENOMIC DNA]</scope>
</reference>
<keyword id="KW-1185">Reference proteome</keyword>
<accession>P28978</accession>
<accession>Q6LEL8</accession>
<organismHost>
    <name type="scientific">Equus caballus</name>
    <name type="common">Horse</name>
    <dbReference type="NCBI Taxonomy" id="9796"/>
</organismHost>
<organism>
    <name type="scientific">Equine herpesvirus 1 (strain Ab4p)</name>
    <name type="common">EHV-1</name>
    <name type="synonym">Equine abortion virus</name>
    <dbReference type="NCBI Taxonomy" id="31520"/>
    <lineage>
        <taxon>Viruses</taxon>
        <taxon>Duplodnaviria</taxon>
        <taxon>Heunggongvirae</taxon>
        <taxon>Peploviricota</taxon>
        <taxon>Herviviricetes</taxon>
        <taxon>Herpesvirales</taxon>
        <taxon>Orthoherpesviridae</taxon>
        <taxon>Alphaherpesvirinae</taxon>
        <taxon>Varicellovirus</taxon>
        <taxon>Varicellovirus equidalpha1</taxon>
        <taxon>Equid alphaherpesvirus 1</taxon>
    </lineage>
</organism>
<name>VG01_EHV1B</name>
<protein>
    <recommendedName>
        <fullName>Uncharacterized gene 1 protein</fullName>
    </recommendedName>
</protein>
<feature type="chain" id="PRO_0000116153" description="Uncharacterized gene 1 protein">
    <location>
        <begin position="1"/>
        <end position="202"/>
    </location>
</feature>
<feature type="region of interest" description="Disordered" evidence="1">
    <location>
        <begin position="1"/>
        <end position="32"/>
    </location>
</feature>
<feature type="region of interest" description="Disordered" evidence="1">
    <location>
        <begin position="46"/>
        <end position="95"/>
    </location>
</feature>
<feature type="compositionally biased region" description="Low complexity" evidence="1">
    <location>
        <begin position="47"/>
        <end position="79"/>
    </location>
</feature>
<proteinExistence type="predicted"/>
<dbReference type="EMBL" id="AY665713">
    <property type="protein sequence ID" value="AAT67258.1"/>
    <property type="molecule type" value="Genomic_DNA"/>
</dbReference>
<dbReference type="PIR" id="B36795">
    <property type="entry name" value="B36795"/>
</dbReference>
<dbReference type="SMR" id="P28978"/>
<dbReference type="KEGG" id="vg:1487546"/>
<dbReference type="Proteomes" id="UP000001189">
    <property type="component" value="Segment"/>
</dbReference>
<sequence>MRPEGVSRGRASSVSISMCPPPPNGARRASLGCAPPLNSRPVCCAPSSVSLSSSSSRRSMPSLGSSRSSSLPSTGSLRSITRDPERLPSRPPSYTAINPECLLERGAERPRAWTASVMTAPPSYSEALCQAPPAYELVPELSYHPTQDPRGVYSSRSDPHQTSRRRQNPICIFIIVVATMLLILGLLLTITLSSLTNGKKEK</sequence>
<gene>
    <name type="ordered locus">1</name>
</gene>